<protein>
    <recommendedName>
        <fullName>Protein RALF-like 26</fullName>
    </recommendedName>
</protein>
<dbReference type="EMBL" id="AB026647">
    <property type="status" value="NOT_ANNOTATED_CDS"/>
    <property type="molecule type" value="Genomic_DNA"/>
</dbReference>
<dbReference type="EMBL" id="CP002686">
    <property type="protein sequence ID" value="AEE76988.1"/>
    <property type="molecule type" value="Genomic_DNA"/>
</dbReference>
<dbReference type="EMBL" id="CP002686">
    <property type="protein sequence ID" value="ANM65993.1"/>
    <property type="molecule type" value="Genomic_DNA"/>
</dbReference>
<dbReference type="EMBL" id="CP002686">
    <property type="protein sequence ID" value="ANM65994.1"/>
    <property type="molecule type" value="Genomic_DNA"/>
</dbReference>
<dbReference type="EMBL" id="BT026398">
    <property type="protein sequence ID" value="ABH04505.1"/>
    <property type="molecule type" value="mRNA"/>
</dbReference>
<dbReference type="EMBL" id="AY088506">
    <property type="protein sequence ID" value="AAM66041.1"/>
    <property type="molecule type" value="mRNA"/>
</dbReference>
<dbReference type="RefSeq" id="NP_001327922.1">
    <property type="nucleotide sequence ID" value="NM_001338743.1"/>
</dbReference>
<dbReference type="RefSeq" id="NP_001327923.1">
    <property type="nucleotide sequence ID" value="NM_001338742.1"/>
</dbReference>
<dbReference type="RefSeq" id="NP_566761.1">
    <property type="nucleotide sequence ID" value="NM_113422.4"/>
</dbReference>
<dbReference type="STRING" id="3702.Q0V822"/>
<dbReference type="GlyCosmos" id="Q0V822">
    <property type="glycosylation" value="1 site, No reported glycans"/>
</dbReference>
<dbReference type="GlyGen" id="Q0V822">
    <property type="glycosylation" value="1 site"/>
</dbReference>
<dbReference type="PaxDb" id="3702-AT3G25170.1"/>
<dbReference type="ProteomicsDB" id="228170"/>
<dbReference type="EnsemblPlants" id="AT3G25170.1">
    <property type="protein sequence ID" value="AT3G25170.1"/>
    <property type="gene ID" value="AT3G25170"/>
</dbReference>
<dbReference type="EnsemblPlants" id="AT3G25170.2">
    <property type="protein sequence ID" value="AT3G25170.2"/>
    <property type="gene ID" value="AT3G25170"/>
</dbReference>
<dbReference type="EnsemblPlants" id="AT3G25170.3">
    <property type="protein sequence ID" value="AT3G25170.3"/>
    <property type="gene ID" value="AT3G25170"/>
</dbReference>
<dbReference type="GeneID" id="822109"/>
<dbReference type="Gramene" id="AT3G25170.1">
    <property type="protein sequence ID" value="AT3G25170.1"/>
    <property type="gene ID" value="AT3G25170"/>
</dbReference>
<dbReference type="Gramene" id="AT3G25170.2">
    <property type="protein sequence ID" value="AT3G25170.2"/>
    <property type="gene ID" value="AT3G25170"/>
</dbReference>
<dbReference type="Gramene" id="AT3G25170.3">
    <property type="protein sequence ID" value="AT3G25170.3"/>
    <property type="gene ID" value="AT3G25170"/>
</dbReference>
<dbReference type="KEGG" id="ath:AT3G25170"/>
<dbReference type="Araport" id="AT3G25170"/>
<dbReference type="TAIR" id="AT3G25170">
    <property type="gene designation" value="RALFL26"/>
</dbReference>
<dbReference type="eggNOG" id="ENOG502SYWJ">
    <property type="taxonomic scope" value="Eukaryota"/>
</dbReference>
<dbReference type="HOGENOM" id="CLU_200725_0_0_1"/>
<dbReference type="InParanoid" id="Q0V822"/>
<dbReference type="OMA" id="CHPHNSH"/>
<dbReference type="PhylomeDB" id="Q0V822"/>
<dbReference type="PRO" id="PR:Q0V822"/>
<dbReference type="Proteomes" id="UP000006548">
    <property type="component" value="Chromosome 3"/>
</dbReference>
<dbReference type="ExpressionAtlas" id="Q0V822">
    <property type="expression patterns" value="baseline and differential"/>
</dbReference>
<dbReference type="GO" id="GO:0048046">
    <property type="term" value="C:apoplast"/>
    <property type="evidence" value="ECO:0000250"/>
    <property type="project" value="TAIR"/>
</dbReference>
<dbReference type="GO" id="GO:0005179">
    <property type="term" value="F:hormone activity"/>
    <property type="evidence" value="ECO:0000250"/>
    <property type="project" value="UniProtKB"/>
</dbReference>
<dbReference type="GO" id="GO:0019722">
    <property type="term" value="P:calcium-mediated signaling"/>
    <property type="evidence" value="ECO:0000250"/>
    <property type="project" value="UniProtKB"/>
</dbReference>
<dbReference type="GO" id="GO:0007267">
    <property type="term" value="P:cell-cell signaling"/>
    <property type="evidence" value="ECO:0000250"/>
    <property type="project" value="TAIR"/>
</dbReference>
<dbReference type="GO" id="GO:0040008">
    <property type="term" value="P:regulation of growth"/>
    <property type="evidence" value="ECO:0007669"/>
    <property type="project" value="UniProtKB-ARBA"/>
</dbReference>
<dbReference type="InterPro" id="IPR008801">
    <property type="entry name" value="RALF"/>
</dbReference>
<dbReference type="PANTHER" id="PTHR34270:SF5">
    <property type="entry name" value="PROTEIN RALF-LIKE 10-RELATED"/>
    <property type="match status" value="1"/>
</dbReference>
<dbReference type="PANTHER" id="PTHR34270">
    <property type="entry name" value="PROTEIN RALF-LIKE 15-RELATED"/>
    <property type="match status" value="1"/>
</dbReference>
<dbReference type="Pfam" id="PF05498">
    <property type="entry name" value="RALF"/>
    <property type="match status" value="1"/>
</dbReference>
<organism>
    <name type="scientific">Arabidopsis thaliana</name>
    <name type="common">Mouse-ear cress</name>
    <dbReference type="NCBI Taxonomy" id="3702"/>
    <lineage>
        <taxon>Eukaryota</taxon>
        <taxon>Viridiplantae</taxon>
        <taxon>Streptophyta</taxon>
        <taxon>Embryophyta</taxon>
        <taxon>Tracheophyta</taxon>
        <taxon>Spermatophyta</taxon>
        <taxon>Magnoliopsida</taxon>
        <taxon>eudicotyledons</taxon>
        <taxon>Gunneridae</taxon>
        <taxon>Pentapetalae</taxon>
        <taxon>rosids</taxon>
        <taxon>malvids</taxon>
        <taxon>Brassicales</taxon>
        <taxon>Brassicaceae</taxon>
        <taxon>Camelineae</taxon>
        <taxon>Arabidopsis</taxon>
    </lineage>
</organism>
<evidence type="ECO:0000250" key="1"/>
<evidence type="ECO:0000255" key="2"/>
<evidence type="ECO:0000305" key="3"/>
<sequence>MKAWMIILLVICVAVVVEQSEARKGRKYLNPGVLDRCRGPNPPAGCHPHNSHHKPRVPVHNYSRGCSRITRCRRDA</sequence>
<reference key="1">
    <citation type="journal article" date="2000" name="DNA Res.">
        <title>Structural analysis of Arabidopsis thaliana chromosome 3. I. Sequence features of the regions of 4,504,864 bp covered by sixty P1 and TAC clones.</title>
        <authorList>
            <person name="Sato S."/>
            <person name="Nakamura Y."/>
            <person name="Kaneko T."/>
            <person name="Katoh T."/>
            <person name="Asamizu E."/>
            <person name="Tabata S."/>
        </authorList>
    </citation>
    <scope>NUCLEOTIDE SEQUENCE [LARGE SCALE GENOMIC DNA]</scope>
    <source>
        <strain>cv. Columbia</strain>
    </source>
</reference>
<reference key="2">
    <citation type="journal article" date="2017" name="Plant J.">
        <title>Araport11: a complete reannotation of the Arabidopsis thaliana reference genome.</title>
        <authorList>
            <person name="Cheng C.Y."/>
            <person name="Krishnakumar V."/>
            <person name="Chan A.P."/>
            <person name="Thibaud-Nissen F."/>
            <person name="Schobel S."/>
            <person name="Town C.D."/>
        </authorList>
    </citation>
    <scope>GENOME REANNOTATION</scope>
    <source>
        <strain>cv. Columbia</strain>
    </source>
</reference>
<reference key="3">
    <citation type="submission" date="2006-08" db="EMBL/GenBank/DDBJ databases">
        <title>Arabidopsis ORF Clones.</title>
        <authorList>
            <person name="Quinitio C."/>
            <person name="Chen H."/>
            <person name="Kim C.J."/>
            <person name="Shinn P."/>
            <person name="Ecker J.R."/>
        </authorList>
    </citation>
    <scope>NUCLEOTIDE SEQUENCE [LARGE SCALE MRNA]</scope>
    <source>
        <strain>cv. Columbia</strain>
    </source>
</reference>
<reference key="4">
    <citation type="submission" date="2002-03" db="EMBL/GenBank/DDBJ databases">
        <title>Full-length cDNA from Arabidopsis thaliana.</title>
        <authorList>
            <person name="Brover V.V."/>
            <person name="Troukhan M.E."/>
            <person name="Alexandrov N.A."/>
            <person name="Lu Y.-P."/>
            <person name="Flavell R.B."/>
            <person name="Feldmann K.A."/>
        </authorList>
    </citation>
    <scope>NUCLEOTIDE SEQUENCE [LARGE SCALE MRNA]</scope>
</reference>
<reference key="5">
    <citation type="journal article" date="2002" name="In Silico Biol.">
        <title>Peptomics, identification of novel cationic Arabidopsis peptides with conserved sequence motifs.</title>
        <authorList>
            <person name="Olsen A.N."/>
            <person name="Mundy J."/>
            <person name="Skriver K."/>
        </authorList>
    </citation>
    <scope>GENE FAMILY</scope>
    <scope>NOMENCLATURE</scope>
</reference>
<name>RLF26_ARATH</name>
<comment type="function">
    <text evidence="1">Cell signaling peptide that may regulate plant stress, growth, and development. Mediates a rapid alkalinization of extracellular space by mediating a transient increase in the cytoplasmic Ca(2+) concentration leading to a calcium-dependent signaling events through a cell surface receptor and a concomitant activation of some intracellular mitogen-activated protein kinases (By similarity).</text>
</comment>
<comment type="subcellular location">
    <subcellularLocation>
        <location evidence="1">Secreted</location>
    </subcellularLocation>
</comment>
<comment type="similarity">
    <text evidence="3">Belongs to the plant rapid alkalinization factor (RALF) family.</text>
</comment>
<gene>
    <name type="primary">RALFL26</name>
    <name type="ordered locus">At3g25170</name>
    <name type="ORF">MJL12.13</name>
</gene>
<proteinExistence type="inferred from homology"/>
<keyword id="KW-1015">Disulfide bond</keyword>
<keyword id="KW-0325">Glycoprotein</keyword>
<keyword id="KW-0372">Hormone</keyword>
<keyword id="KW-1185">Reference proteome</keyword>
<keyword id="KW-0964">Secreted</keyword>
<keyword id="KW-0732">Signal</keyword>
<accession>Q0V822</accession>
<accession>A0A1I9LTT5</accession>
<accession>Q8L9C9</accession>
<feature type="signal peptide" evidence="2">
    <location>
        <begin position="1"/>
        <end position="22"/>
    </location>
</feature>
<feature type="chain" id="PRO_0000420323" description="Protein RALF-like 26">
    <location>
        <begin position="23"/>
        <end position="76"/>
    </location>
</feature>
<feature type="glycosylation site" description="N-linked (GlcNAc...) asparagine" evidence="2">
    <location>
        <position position="61"/>
    </location>
</feature>
<feature type="disulfide bond" evidence="1">
    <location>
        <begin position="37"/>
        <end position="46"/>
    </location>
</feature>
<feature type="disulfide bond" evidence="1">
    <location>
        <begin position="66"/>
        <end position="72"/>
    </location>
</feature>
<feature type="sequence conflict" description="In Ref. 4; AAM66041." evidence="3" ref="4">
    <original>K</original>
    <variation>N</variation>
    <location>
        <position position="2"/>
    </location>
</feature>